<feature type="chain" id="PRO_0000233203" description="Cytochrome b559 subunit alpha">
    <location>
        <begin position="1"/>
        <end position="83"/>
    </location>
</feature>
<feature type="transmembrane region" description="Helical" evidence="1">
    <location>
        <begin position="21"/>
        <end position="35"/>
    </location>
</feature>
<feature type="binding site" description="axial binding residue" evidence="1">
    <location>
        <position position="23"/>
    </location>
    <ligand>
        <name>heme</name>
        <dbReference type="ChEBI" id="CHEBI:30413"/>
        <note>ligand shared with beta subunit</note>
    </ligand>
    <ligandPart>
        <name>Fe</name>
        <dbReference type="ChEBI" id="CHEBI:18248"/>
    </ligandPart>
</feature>
<reference key="1">
    <citation type="journal article" date="2006" name="BMC Genomics">
        <title>The complete chloroplast genome sequence of Gossypium hirsutum: organization and phylogenetic relationships to other angiosperms.</title>
        <authorList>
            <person name="Lee S.-B."/>
            <person name="Kaittanis C."/>
            <person name="Jansen R.K."/>
            <person name="Hostetler J.B."/>
            <person name="Tallon L.J."/>
            <person name="Town C.D."/>
            <person name="Daniell H."/>
        </authorList>
    </citation>
    <scope>NUCLEOTIDE SEQUENCE [LARGE SCALE GENOMIC DNA]</scope>
    <source>
        <strain>cv. Coker 310FR</strain>
    </source>
</reference>
<dbReference type="EMBL" id="DQ345959">
    <property type="protein sequence ID" value="ABC73645.1"/>
    <property type="molecule type" value="Genomic_DNA"/>
</dbReference>
<dbReference type="RefSeq" id="YP_538952.1">
    <property type="nucleotide sequence ID" value="NC_007944.1"/>
</dbReference>
<dbReference type="SMR" id="Q2L925"/>
<dbReference type="GeneID" id="3989166"/>
<dbReference type="KEGG" id="ghi:3989166"/>
<dbReference type="OMA" id="VRYWVIH"/>
<dbReference type="OrthoDB" id="3712at41938"/>
<dbReference type="Proteomes" id="UP000189702">
    <property type="component" value="Chloroplast Pltd"/>
</dbReference>
<dbReference type="GO" id="GO:0009535">
    <property type="term" value="C:chloroplast thylakoid membrane"/>
    <property type="evidence" value="ECO:0007669"/>
    <property type="project" value="UniProtKB-SubCell"/>
</dbReference>
<dbReference type="GO" id="GO:0009539">
    <property type="term" value="C:photosystem II reaction center"/>
    <property type="evidence" value="ECO:0007669"/>
    <property type="project" value="InterPro"/>
</dbReference>
<dbReference type="GO" id="GO:0009055">
    <property type="term" value="F:electron transfer activity"/>
    <property type="evidence" value="ECO:0007669"/>
    <property type="project" value="UniProtKB-UniRule"/>
</dbReference>
<dbReference type="GO" id="GO:0020037">
    <property type="term" value="F:heme binding"/>
    <property type="evidence" value="ECO:0007669"/>
    <property type="project" value="InterPro"/>
</dbReference>
<dbReference type="GO" id="GO:0005506">
    <property type="term" value="F:iron ion binding"/>
    <property type="evidence" value="ECO:0007669"/>
    <property type="project" value="UniProtKB-UniRule"/>
</dbReference>
<dbReference type="GO" id="GO:0009767">
    <property type="term" value="P:photosynthetic electron transport chain"/>
    <property type="evidence" value="ECO:0007669"/>
    <property type="project" value="InterPro"/>
</dbReference>
<dbReference type="Gene3D" id="1.20.5.860">
    <property type="entry name" value="Photosystem II cytochrome b559, alpha subunit"/>
    <property type="match status" value="1"/>
</dbReference>
<dbReference type="HAMAP" id="MF_00642">
    <property type="entry name" value="PSII_PsbE"/>
    <property type="match status" value="1"/>
</dbReference>
<dbReference type="InterPro" id="IPR006217">
    <property type="entry name" value="PSII_cyt_b559_asu"/>
</dbReference>
<dbReference type="InterPro" id="IPR037025">
    <property type="entry name" value="PSII_cyt_b559_asu_sf"/>
</dbReference>
<dbReference type="InterPro" id="IPR006216">
    <property type="entry name" value="PSII_cyt_b559_CS"/>
</dbReference>
<dbReference type="InterPro" id="IPR013081">
    <property type="entry name" value="PSII_cyt_b559_N"/>
</dbReference>
<dbReference type="InterPro" id="IPR013082">
    <property type="entry name" value="PSII_cytb559_asu_lum"/>
</dbReference>
<dbReference type="NCBIfam" id="TIGR01332">
    <property type="entry name" value="cyt_b559_alpha"/>
    <property type="match status" value="1"/>
</dbReference>
<dbReference type="PANTHER" id="PTHR33391">
    <property type="entry name" value="CYTOCHROME B559 SUBUNIT BETA-RELATED"/>
    <property type="match status" value="1"/>
</dbReference>
<dbReference type="PANTHER" id="PTHR33391:SF9">
    <property type="entry name" value="CYTOCHROME B559 SUBUNIT BETA-RELATED"/>
    <property type="match status" value="1"/>
</dbReference>
<dbReference type="Pfam" id="PF00283">
    <property type="entry name" value="Cytochrom_B559"/>
    <property type="match status" value="1"/>
</dbReference>
<dbReference type="Pfam" id="PF00284">
    <property type="entry name" value="Cytochrom_B559a"/>
    <property type="match status" value="1"/>
</dbReference>
<dbReference type="PIRSF" id="PIRSF000036">
    <property type="entry name" value="PsbE"/>
    <property type="match status" value="1"/>
</dbReference>
<dbReference type="SUPFAM" id="SSF161045">
    <property type="entry name" value="Cytochrome b559 subunits"/>
    <property type="match status" value="1"/>
</dbReference>
<dbReference type="PROSITE" id="PS00537">
    <property type="entry name" value="CYTOCHROME_B559"/>
    <property type="match status" value="1"/>
</dbReference>
<organism>
    <name type="scientific">Gossypium hirsutum</name>
    <name type="common">Upland cotton</name>
    <name type="synonym">Gossypium mexicanum</name>
    <dbReference type="NCBI Taxonomy" id="3635"/>
    <lineage>
        <taxon>Eukaryota</taxon>
        <taxon>Viridiplantae</taxon>
        <taxon>Streptophyta</taxon>
        <taxon>Embryophyta</taxon>
        <taxon>Tracheophyta</taxon>
        <taxon>Spermatophyta</taxon>
        <taxon>Magnoliopsida</taxon>
        <taxon>eudicotyledons</taxon>
        <taxon>Gunneridae</taxon>
        <taxon>Pentapetalae</taxon>
        <taxon>rosids</taxon>
        <taxon>malvids</taxon>
        <taxon>Malvales</taxon>
        <taxon>Malvaceae</taxon>
        <taxon>Malvoideae</taxon>
        <taxon>Gossypium</taxon>
    </lineage>
</organism>
<gene>
    <name evidence="1" type="primary">psbE</name>
</gene>
<protein>
    <recommendedName>
        <fullName evidence="1">Cytochrome b559 subunit alpha</fullName>
    </recommendedName>
    <alternativeName>
        <fullName evidence="1">PSII reaction center subunit V</fullName>
    </alternativeName>
</protein>
<proteinExistence type="inferred from homology"/>
<evidence type="ECO:0000255" key="1">
    <source>
        <dbReference type="HAMAP-Rule" id="MF_00642"/>
    </source>
</evidence>
<geneLocation type="chloroplast"/>
<sequence>MSGSTGERSFADIITSIRYWVIHSITIPSLFIAGWLFVSTGLAYDVFGSPRPNEYFTESRQGIPLITGRFDSLEQLDEFSRSF</sequence>
<name>PSBE_GOSHI</name>
<accession>Q2L925</accession>
<comment type="function">
    <text evidence="1">This b-type cytochrome is tightly associated with the reaction center of photosystem II (PSII). PSII is a light-driven water:plastoquinone oxidoreductase that uses light energy to abstract electrons from H(2)O, generating O(2) and a proton gradient subsequently used for ATP formation. It consists of a core antenna complex that captures photons, and an electron transfer chain that converts photonic excitation into a charge separation.</text>
</comment>
<comment type="cofactor">
    <cofactor evidence="1">
        <name>heme b</name>
        <dbReference type="ChEBI" id="CHEBI:60344"/>
    </cofactor>
    <text evidence="1">With its partner (PsbF) binds heme. PSII binds additional chlorophylls, carotenoids and specific lipids.</text>
</comment>
<comment type="subunit">
    <text evidence="1">Heterodimer of an alpha subunit and a beta subunit. PSII is composed of 1 copy each of membrane proteins PsbA, PsbB, PsbC, PsbD, PsbE, PsbF, PsbH, PsbI, PsbJ, PsbK, PsbL, PsbM, PsbT, PsbX, PsbY, PsbZ, Psb30/Ycf12, at least 3 peripheral proteins of the oxygen-evolving complex and a large number of cofactors. It forms dimeric complexes.</text>
</comment>
<comment type="subcellular location">
    <subcellularLocation>
        <location evidence="1">Plastid</location>
        <location evidence="1">Chloroplast thylakoid membrane</location>
        <topology evidence="1">Single-pass membrane protein</topology>
    </subcellularLocation>
</comment>
<comment type="similarity">
    <text evidence="1">Belongs to the PsbE/PsbF family.</text>
</comment>
<keyword id="KW-0150">Chloroplast</keyword>
<keyword id="KW-0249">Electron transport</keyword>
<keyword id="KW-0349">Heme</keyword>
<keyword id="KW-0408">Iron</keyword>
<keyword id="KW-0472">Membrane</keyword>
<keyword id="KW-0479">Metal-binding</keyword>
<keyword id="KW-0602">Photosynthesis</keyword>
<keyword id="KW-0604">Photosystem II</keyword>
<keyword id="KW-0934">Plastid</keyword>
<keyword id="KW-1185">Reference proteome</keyword>
<keyword id="KW-0793">Thylakoid</keyword>
<keyword id="KW-0812">Transmembrane</keyword>
<keyword id="KW-1133">Transmembrane helix</keyword>
<keyword id="KW-0813">Transport</keyword>